<gene>
    <name evidence="1" type="primary">pheS</name>
    <name type="ordered locus">XOO3023</name>
</gene>
<organism>
    <name type="scientific">Xanthomonas oryzae pv. oryzae (strain MAFF 311018)</name>
    <dbReference type="NCBI Taxonomy" id="342109"/>
    <lineage>
        <taxon>Bacteria</taxon>
        <taxon>Pseudomonadati</taxon>
        <taxon>Pseudomonadota</taxon>
        <taxon>Gammaproteobacteria</taxon>
        <taxon>Lysobacterales</taxon>
        <taxon>Lysobacteraceae</taxon>
        <taxon>Xanthomonas</taxon>
    </lineage>
</organism>
<feature type="chain" id="PRO_0000232042" description="Phenylalanine--tRNA ligase alpha subunit">
    <location>
        <begin position="1"/>
        <end position="331"/>
    </location>
</feature>
<feature type="binding site" evidence="1">
    <location>
        <position position="252"/>
    </location>
    <ligand>
        <name>Mg(2+)</name>
        <dbReference type="ChEBI" id="CHEBI:18420"/>
        <note>shared with beta subunit</note>
    </ligand>
</feature>
<comment type="catalytic activity">
    <reaction evidence="1">
        <text>tRNA(Phe) + L-phenylalanine + ATP = L-phenylalanyl-tRNA(Phe) + AMP + diphosphate + H(+)</text>
        <dbReference type="Rhea" id="RHEA:19413"/>
        <dbReference type="Rhea" id="RHEA-COMP:9668"/>
        <dbReference type="Rhea" id="RHEA-COMP:9699"/>
        <dbReference type="ChEBI" id="CHEBI:15378"/>
        <dbReference type="ChEBI" id="CHEBI:30616"/>
        <dbReference type="ChEBI" id="CHEBI:33019"/>
        <dbReference type="ChEBI" id="CHEBI:58095"/>
        <dbReference type="ChEBI" id="CHEBI:78442"/>
        <dbReference type="ChEBI" id="CHEBI:78531"/>
        <dbReference type="ChEBI" id="CHEBI:456215"/>
        <dbReference type="EC" id="6.1.1.20"/>
    </reaction>
</comment>
<comment type="cofactor">
    <cofactor evidence="1">
        <name>Mg(2+)</name>
        <dbReference type="ChEBI" id="CHEBI:18420"/>
    </cofactor>
    <text evidence="1">Binds 2 magnesium ions per tetramer.</text>
</comment>
<comment type="subunit">
    <text evidence="1">Tetramer of two alpha and two beta subunits.</text>
</comment>
<comment type="subcellular location">
    <subcellularLocation>
        <location evidence="1">Cytoplasm</location>
    </subcellularLocation>
</comment>
<comment type="similarity">
    <text evidence="1">Belongs to the class-II aminoacyl-tRNA synthetase family. Phe-tRNA synthetase alpha subunit type 1 subfamily.</text>
</comment>
<evidence type="ECO:0000255" key="1">
    <source>
        <dbReference type="HAMAP-Rule" id="MF_00281"/>
    </source>
</evidence>
<dbReference type="EC" id="6.1.1.20" evidence="1"/>
<dbReference type="EMBL" id="AP008229">
    <property type="protein sequence ID" value="BAE69778.1"/>
    <property type="molecule type" value="Genomic_DNA"/>
</dbReference>
<dbReference type="RefSeq" id="WP_011259704.1">
    <property type="nucleotide sequence ID" value="NC_007705.1"/>
</dbReference>
<dbReference type="SMR" id="Q2P0Z9"/>
<dbReference type="KEGG" id="xom:XOO3023"/>
<dbReference type="HOGENOM" id="CLU_025086_0_1_6"/>
<dbReference type="GO" id="GO:0005737">
    <property type="term" value="C:cytoplasm"/>
    <property type="evidence" value="ECO:0007669"/>
    <property type="project" value="UniProtKB-SubCell"/>
</dbReference>
<dbReference type="GO" id="GO:0005524">
    <property type="term" value="F:ATP binding"/>
    <property type="evidence" value="ECO:0007669"/>
    <property type="project" value="UniProtKB-UniRule"/>
</dbReference>
<dbReference type="GO" id="GO:0000287">
    <property type="term" value="F:magnesium ion binding"/>
    <property type="evidence" value="ECO:0007669"/>
    <property type="project" value="UniProtKB-UniRule"/>
</dbReference>
<dbReference type="GO" id="GO:0004826">
    <property type="term" value="F:phenylalanine-tRNA ligase activity"/>
    <property type="evidence" value="ECO:0007669"/>
    <property type="project" value="UniProtKB-UniRule"/>
</dbReference>
<dbReference type="GO" id="GO:0000049">
    <property type="term" value="F:tRNA binding"/>
    <property type="evidence" value="ECO:0007669"/>
    <property type="project" value="InterPro"/>
</dbReference>
<dbReference type="GO" id="GO:0006432">
    <property type="term" value="P:phenylalanyl-tRNA aminoacylation"/>
    <property type="evidence" value="ECO:0007669"/>
    <property type="project" value="UniProtKB-UniRule"/>
</dbReference>
<dbReference type="CDD" id="cd00496">
    <property type="entry name" value="PheRS_alpha_core"/>
    <property type="match status" value="1"/>
</dbReference>
<dbReference type="FunFam" id="3.30.930.10:FF:000003">
    <property type="entry name" value="Phenylalanine--tRNA ligase alpha subunit"/>
    <property type="match status" value="1"/>
</dbReference>
<dbReference type="Gene3D" id="3.30.930.10">
    <property type="entry name" value="Bira Bifunctional Protein, Domain 2"/>
    <property type="match status" value="1"/>
</dbReference>
<dbReference type="HAMAP" id="MF_00281">
    <property type="entry name" value="Phe_tRNA_synth_alpha1"/>
    <property type="match status" value="1"/>
</dbReference>
<dbReference type="InterPro" id="IPR006195">
    <property type="entry name" value="aa-tRNA-synth_II"/>
</dbReference>
<dbReference type="InterPro" id="IPR045864">
    <property type="entry name" value="aa-tRNA-synth_II/BPL/LPL"/>
</dbReference>
<dbReference type="InterPro" id="IPR004188">
    <property type="entry name" value="Phe-tRNA_ligase_II_N"/>
</dbReference>
<dbReference type="InterPro" id="IPR022911">
    <property type="entry name" value="Phe_tRNA_ligase_alpha1_bac"/>
</dbReference>
<dbReference type="InterPro" id="IPR002319">
    <property type="entry name" value="Phenylalanyl-tRNA_Synthase"/>
</dbReference>
<dbReference type="InterPro" id="IPR010978">
    <property type="entry name" value="tRNA-bd_arm"/>
</dbReference>
<dbReference type="PANTHER" id="PTHR11538:SF41">
    <property type="entry name" value="PHENYLALANINE--TRNA LIGASE, MITOCHONDRIAL"/>
    <property type="match status" value="1"/>
</dbReference>
<dbReference type="PANTHER" id="PTHR11538">
    <property type="entry name" value="PHENYLALANYL-TRNA SYNTHETASE"/>
    <property type="match status" value="1"/>
</dbReference>
<dbReference type="Pfam" id="PF02912">
    <property type="entry name" value="Phe_tRNA-synt_N"/>
    <property type="match status" value="1"/>
</dbReference>
<dbReference type="Pfam" id="PF01409">
    <property type="entry name" value="tRNA-synt_2d"/>
    <property type="match status" value="1"/>
</dbReference>
<dbReference type="SUPFAM" id="SSF55681">
    <property type="entry name" value="Class II aaRS and biotin synthetases"/>
    <property type="match status" value="1"/>
</dbReference>
<dbReference type="SUPFAM" id="SSF46589">
    <property type="entry name" value="tRNA-binding arm"/>
    <property type="match status" value="1"/>
</dbReference>
<dbReference type="PROSITE" id="PS50862">
    <property type="entry name" value="AA_TRNA_LIGASE_II"/>
    <property type="match status" value="1"/>
</dbReference>
<name>SYFA_XANOM</name>
<sequence length="331" mass="37207">MSEIQSLTERALADVAAAQTPDQLEALRVALLGKSGSITAQLKQLGTLPADQRKAAGEAINLLRDALTAALAERKNTLETAALDARLAGERIDVTLPGRRSERGGLHPVTRTLERIVEIFARLGYELSDGPEIEDDWHNFEALNFPPHHPARAMHDTFYFGDGRLLRTHTSGVQVRYMDAHKPPLHMIAAGKVYRSDSDQTHSPMFHQLEGLLVDEHSTFADLKGTLSEFVRAFFERDFEMRFRPSYFPFVEPGAEVDIAWQQPDGSTRWLEVLGCGMVHPNVLRNVGIDPERYTGFAFGLGVERFAMLRYGVNDLRAFFENDVRFLRQFA</sequence>
<accession>Q2P0Z9</accession>
<proteinExistence type="inferred from homology"/>
<reference key="1">
    <citation type="journal article" date="2005" name="Jpn. Agric. Res. Q.">
        <title>Genome sequence of Xanthomonas oryzae pv. oryzae suggests contribution of large numbers of effector genes and insertion sequences to its race diversity.</title>
        <authorList>
            <person name="Ochiai H."/>
            <person name="Inoue Y."/>
            <person name="Takeya M."/>
            <person name="Sasaki A."/>
            <person name="Kaku H."/>
        </authorList>
    </citation>
    <scope>NUCLEOTIDE SEQUENCE [LARGE SCALE GENOMIC DNA]</scope>
    <source>
        <strain>MAFF 311018</strain>
    </source>
</reference>
<protein>
    <recommendedName>
        <fullName evidence="1">Phenylalanine--tRNA ligase alpha subunit</fullName>
        <ecNumber evidence="1">6.1.1.20</ecNumber>
    </recommendedName>
    <alternativeName>
        <fullName evidence="1">Phenylalanyl-tRNA synthetase alpha subunit</fullName>
        <shortName evidence="1">PheRS</shortName>
    </alternativeName>
</protein>
<keyword id="KW-0030">Aminoacyl-tRNA synthetase</keyword>
<keyword id="KW-0067">ATP-binding</keyword>
<keyword id="KW-0963">Cytoplasm</keyword>
<keyword id="KW-0436">Ligase</keyword>
<keyword id="KW-0460">Magnesium</keyword>
<keyword id="KW-0479">Metal-binding</keyword>
<keyword id="KW-0547">Nucleotide-binding</keyword>
<keyword id="KW-0648">Protein biosynthesis</keyword>